<organism>
    <name type="scientific">Acanthamoeba polyphaga mimivirus</name>
    <name type="common">APMV</name>
    <dbReference type="NCBI Taxonomy" id="212035"/>
    <lineage>
        <taxon>Viruses</taxon>
        <taxon>Varidnaviria</taxon>
        <taxon>Bamfordvirae</taxon>
        <taxon>Nucleocytoviricota</taxon>
        <taxon>Megaviricetes</taxon>
        <taxon>Imitervirales</taxon>
        <taxon>Mimiviridae</taxon>
        <taxon>Megamimivirinae</taxon>
        <taxon>Mimivirus</taxon>
        <taxon>Mimivirus bradfordmassiliense</taxon>
    </lineage>
</organism>
<proteinExistence type="predicted"/>
<organismHost>
    <name type="scientific">Acanthamoeba polyphaga</name>
    <name type="common">Amoeba</name>
    <dbReference type="NCBI Taxonomy" id="5757"/>
</organismHost>
<protein>
    <recommendedName>
        <fullName>Uncharacterized protein L95</fullName>
    </recommendedName>
</protein>
<gene>
    <name type="ordered locus">MIMI_L95</name>
</gene>
<feature type="chain" id="PRO_0000071208" description="Uncharacterized protein L95">
    <location>
        <begin position="1"/>
        <end position="107"/>
    </location>
</feature>
<name>YL095_MIMIV</name>
<reference key="1">
    <citation type="journal article" date="2004" name="Science">
        <title>The 1.2-megabase genome sequence of Mimivirus.</title>
        <authorList>
            <person name="Raoult D."/>
            <person name="Audic S."/>
            <person name="Robert C."/>
            <person name="Abergel C."/>
            <person name="Renesto P."/>
            <person name="Ogata H."/>
            <person name="La Scola B."/>
            <person name="Susan M."/>
            <person name="Claverie J.-M."/>
        </authorList>
    </citation>
    <scope>NUCLEOTIDE SEQUENCE [LARGE SCALE GENOMIC DNA]</scope>
    <source>
        <strain>Rowbotham-Bradford</strain>
    </source>
</reference>
<accession>Q5UPH5</accession>
<sequence>MGGHVDVLDFLIMSGVGIEFTYAVTTASCYNKLSVIKYLHNQNYVINFTFALQEASCRGFVDIVEFLLTNCLDKIDTYHIKIILKSVILGRHNDIVKVYMDNGFYQE</sequence>
<keyword id="KW-1185">Reference proteome</keyword>
<dbReference type="EMBL" id="AY653733">
    <property type="protein sequence ID" value="AAV50370.1"/>
    <property type="molecule type" value="Genomic_DNA"/>
</dbReference>
<dbReference type="SMR" id="Q5UPH5"/>
<dbReference type="Proteomes" id="UP000001134">
    <property type="component" value="Genome"/>
</dbReference>
<dbReference type="Gene3D" id="1.25.40.20">
    <property type="entry name" value="Ankyrin repeat-containing domain"/>
    <property type="match status" value="1"/>
</dbReference>
<dbReference type="InterPro" id="IPR036770">
    <property type="entry name" value="Ankyrin_rpt-contain_sf"/>
</dbReference>
<dbReference type="SUPFAM" id="SSF48403">
    <property type="entry name" value="Ankyrin repeat"/>
    <property type="match status" value="1"/>
</dbReference>